<protein>
    <recommendedName>
        <fullName evidence="1">CCA-adding enzyme</fullName>
        <ecNumber evidence="1">2.7.7.72</ecNumber>
    </recommendedName>
    <alternativeName>
        <fullName evidence="1">CCA tRNA nucleotidyltransferase</fullName>
    </alternativeName>
    <alternativeName>
        <fullName evidence="1">tRNA CCA-pyrophosphorylase</fullName>
    </alternativeName>
    <alternativeName>
        <fullName evidence="1">tRNA adenylyl-/cytidylyl- transferase</fullName>
    </alternativeName>
    <alternativeName>
        <fullName evidence="1">tRNA nucleotidyltransferase</fullName>
    </alternativeName>
    <alternativeName>
        <fullName evidence="1">tRNA-NT</fullName>
    </alternativeName>
</protein>
<reference key="1">
    <citation type="journal article" date="2002" name="Proc. Natl. Acad. Sci. U.S.A.">
        <title>Genome sequence of the hyperthermophilic crenarchaeon Pyrobaculum aerophilum.</title>
        <authorList>
            <person name="Fitz-Gibbon S.T."/>
            <person name="Ladner H."/>
            <person name="Kim U.-J."/>
            <person name="Stetter K.O."/>
            <person name="Simon M.I."/>
            <person name="Miller J.H."/>
        </authorList>
    </citation>
    <scope>NUCLEOTIDE SEQUENCE [LARGE SCALE GENOMIC DNA]</scope>
    <source>
        <strain>ATCC 51768 / DSM 7523 / JCM 9630 / CIP 104966 / NBRC 100827 / IM2</strain>
    </source>
</reference>
<keyword id="KW-0067">ATP-binding</keyword>
<keyword id="KW-0460">Magnesium</keyword>
<keyword id="KW-0479">Metal-binding</keyword>
<keyword id="KW-0547">Nucleotide-binding</keyword>
<keyword id="KW-0548">Nucleotidyltransferase</keyword>
<keyword id="KW-1185">Reference proteome</keyword>
<keyword id="KW-0692">RNA repair</keyword>
<keyword id="KW-0694">RNA-binding</keyword>
<keyword id="KW-0808">Transferase</keyword>
<keyword id="KW-0819">tRNA processing</keyword>
<accession>Q8ZTC3</accession>
<gene>
    <name evidence="1" type="primary">cca</name>
    <name type="ordered locus">PAE3325</name>
</gene>
<comment type="function">
    <text evidence="1">Catalyzes the addition and repair of the essential 3'-terminal CCA sequence in tRNAs without using a nucleic acid template. Adds these three nucleotides in the order of C, C, and A to the tRNA nucleotide-73, using CTP and ATP as substrates and producing inorganic pyrophosphate. tRNA 3'-terminal CCA addition is required both for tRNA processing and repair. Also involved in tRNA surveillance by mediating tandem CCA addition to generate a CCACCA at the 3' terminus of unstable tRNAs. While stable tRNAs receive only 3'-terminal CCA, unstable tRNAs are marked with CCACCA and rapidly degraded.</text>
</comment>
<comment type="catalytic activity">
    <reaction evidence="1">
        <text>a tRNA precursor + 2 CTP + ATP = a tRNA with a 3' CCA end + 3 diphosphate</text>
        <dbReference type="Rhea" id="RHEA:14433"/>
        <dbReference type="Rhea" id="RHEA-COMP:10465"/>
        <dbReference type="Rhea" id="RHEA-COMP:10468"/>
        <dbReference type="ChEBI" id="CHEBI:30616"/>
        <dbReference type="ChEBI" id="CHEBI:33019"/>
        <dbReference type="ChEBI" id="CHEBI:37563"/>
        <dbReference type="ChEBI" id="CHEBI:74896"/>
        <dbReference type="ChEBI" id="CHEBI:83071"/>
        <dbReference type="EC" id="2.7.7.72"/>
    </reaction>
</comment>
<comment type="catalytic activity">
    <reaction evidence="1">
        <text>a tRNA with a 3' CCA end + 2 CTP + ATP = a tRNA with a 3' CCACCA end + 3 diphosphate</text>
        <dbReference type="Rhea" id="RHEA:76235"/>
        <dbReference type="Rhea" id="RHEA-COMP:10468"/>
        <dbReference type="Rhea" id="RHEA-COMP:18655"/>
        <dbReference type="ChEBI" id="CHEBI:30616"/>
        <dbReference type="ChEBI" id="CHEBI:33019"/>
        <dbReference type="ChEBI" id="CHEBI:37563"/>
        <dbReference type="ChEBI" id="CHEBI:83071"/>
        <dbReference type="ChEBI" id="CHEBI:195187"/>
    </reaction>
    <physiologicalReaction direction="left-to-right" evidence="1">
        <dbReference type="Rhea" id="RHEA:76236"/>
    </physiologicalReaction>
</comment>
<comment type="cofactor">
    <cofactor evidence="1">
        <name>Mg(2+)</name>
        <dbReference type="ChEBI" id="CHEBI:18420"/>
    </cofactor>
</comment>
<comment type="subunit">
    <text evidence="1">Homodimer.</text>
</comment>
<comment type="miscellaneous">
    <text evidence="1">A single active site specifically recognizes both ATP and CTP and is responsible for their addition.</text>
</comment>
<comment type="similarity">
    <text evidence="1">Belongs to the tRNA nucleotidyltransferase/poly(A) polymerase family. Archaeal CCA-adding enzyme subfamily.</text>
</comment>
<organism>
    <name type="scientific">Pyrobaculum aerophilum (strain ATCC 51768 / DSM 7523 / JCM 9630 / CIP 104966 / NBRC 100827 / IM2)</name>
    <dbReference type="NCBI Taxonomy" id="178306"/>
    <lineage>
        <taxon>Archaea</taxon>
        <taxon>Thermoproteota</taxon>
        <taxon>Thermoprotei</taxon>
        <taxon>Thermoproteales</taxon>
        <taxon>Thermoproteaceae</taxon>
        <taxon>Pyrobaculum</taxon>
    </lineage>
</organism>
<feature type="chain" id="PRO_0000139077" description="CCA-adding enzyme">
    <location>
        <begin position="1"/>
        <end position="419"/>
    </location>
</feature>
<feature type="binding site" evidence="1">
    <location>
        <position position="54"/>
    </location>
    <ligand>
        <name>ATP</name>
        <dbReference type="ChEBI" id="CHEBI:30616"/>
    </ligand>
</feature>
<feature type="binding site" evidence="1">
    <location>
        <position position="54"/>
    </location>
    <ligand>
        <name>CTP</name>
        <dbReference type="ChEBI" id="CHEBI:37563"/>
    </ligand>
</feature>
<feature type="binding site" evidence="1">
    <location>
        <position position="57"/>
    </location>
    <ligand>
        <name>ATP</name>
        <dbReference type="ChEBI" id="CHEBI:30616"/>
    </ligand>
</feature>
<feature type="binding site" evidence="1">
    <location>
        <position position="57"/>
    </location>
    <ligand>
        <name>CTP</name>
        <dbReference type="ChEBI" id="CHEBI:37563"/>
    </ligand>
</feature>
<feature type="binding site" evidence="1">
    <location>
        <position position="66"/>
    </location>
    <ligand>
        <name>Mg(2+)</name>
        <dbReference type="ChEBI" id="CHEBI:18420"/>
    </ligand>
</feature>
<feature type="binding site" evidence="1">
    <location>
        <position position="68"/>
    </location>
    <ligand>
        <name>Mg(2+)</name>
        <dbReference type="ChEBI" id="CHEBI:18420"/>
    </ligand>
</feature>
<feature type="binding site" evidence="1">
    <location>
        <position position="118"/>
    </location>
    <ligand>
        <name>Mg(2+)</name>
        <dbReference type="ChEBI" id="CHEBI:18420"/>
    </ligand>
</feature>
<feature type="binding site" evidence="1">
    <location>
        <position position="141"/>
    </location>
    <ligand>
        <name>ATP</name>
        <dbReference type="ChEBI" id="CHEBI:30616"/>
    </ligand>
</feature>
<feature type="binding site" evidence="1">
    <location>
        <position position="141"/>
    </location>
    <ligand>
        <name>CTP</name>
        <dbReference type="ChEBI" id="CHEBI:37563"/>
    </ligand>
</feature>
<feature type="binding site" evidence="1">
    <location>
        <position position="161"/>
    </location>
    <ligand>
        <name>ATP</name>
        <dbReference type="ChEBI" id="CHEBI:30616"/>
    </ligand>
</feature>
<feature type="binding site" evidence="1">
    <location>
        <position position="161"/>
    </location>
    <ligand>
        <name>CTP</name>
        <dbReference type="ChEBI" id="CHEBI:37563"/>
    </ligand>
</feature>
<feature type="binding site" evidence="1">
    <location>
        <position position="170"/>
    </location>
    <ligand>
        <name>ATP</name>
        <dbReference type="ChEBI" id="CHEBI:30616"/>
    </ligand>
</feature>
<feature type="binding site" evidence="1">
    <location>
        <position position="170"/>
    </location>
    <ligand>
        <name>CTP</name>
        <dbReference type="ChEBI" id="CHEBI:37563"/>
    </ligand>
</feature>
<proteinExistence type="inferred from homology"/>
<evidence type="ECO:0000255" key="1">
    <source>
        <dbReference type="HAMAP-Rule" id="MF_01264"/>
    </source>
</evidence>
<sequence length="419" mass="48046">MSTLEEVLSEAYKLVIPSEEEEKRIREVTQKVKRLVSQIIEEGGIDALVDVYGSGARGTWLPGQRDIDIFVVLNDRRIKPEDVVKILTSRFTTLGLNWALRYAQHPYVSLQVDDYEVDIVPCYKIQPGERPITAADRSPLHHKFLSERLKKDQILDVRLLKLFLKTIGVYGAEIKTEGFSGYLTELLVVYYGSFIEVLRAASRWRPYKTYITFVETSAKFKSPLVVVDPVDPNRNAAAAVSLTSMSTLILAARRFLKKPSLSYFQPSRGYAIRQVETVEVVYPYPGEPPDIVWGKYKRIGRNLFKWLRECGFKVFRWGVESDEKTYVKLVYVVEQTKLAPYTLHKGPPVYDDAVDAFIEKYVNEEVIGPFVVGARAYVIKKRKWTDISHCINAKLGKGNYDIRVNLYDGDLVRKTPWLT</sequence>
<name>CCA_PYRAE</name>
<dbReference type="EC" id="2.7.7.72" evidence="1"/>
<dbReference type="EMBL" id="AE009441">
    <property type="protein sequence ID" value="AAL64839.1"/>
    <property type="molecule type" value="Genomic_DNA"/>
</dbReference>
<dbReference type="RefSeq" id="WP_011009306.1">
    <property type="nucleotide sequence ID" value="NC_003364.1"/>
</dbReference>
<dbReference type="SMR" id="Q8ZTC3"/>
<dbReference type="FunCoup" id="Q8ZTC3">
    <property type="interactions" value="1"/>
</dbReference>
<dbReference type="STRING" id="178306.PAE3325"/>
<dbReference type="EnsemblBacteria" id="AAL64839">
    <property type="protein sequence ID" value="AAL64839"/>
    <property type="gene ID" value="PAE3325"/>
</dbReference>
<dbReference type="GeneID" id="1464029"/>
<dbReference type="KEGG" id="pai:PAE3325"/>
<dbReference type="PATRIC" id="fig|178306.9.peg.2503"/>
<dbReference type="eggNOG" id="arCOG04249">
    <property type="taxonomic scope" value="Archaea"/>
</dbReference>
<dbReference type="HOGENOM" id="CLU_044679_1_0_2"/>
<dbReference type="InParanoid" id="Q8ZTC3"/>
<dbReference type="Proteomes" id="UP000002439">
    <property type="component" value="Chromosome"/>
</dbReference>
<dbReference type="GO" id="GO:0005524">
    <property type="term" value="F:ATP binding"/>
    <property type="evidence" value="ECO:0007669"/>
    <property type="project" value="UniProtKB-UniRule"/>
</dbReference>
<dbReference type="GO" id="GO:0004810">
    <property type="term" value="F:CCA tRNA nucleotidyltransferase activity"/>
    <property type="evidence" value="ECO:0007669"/>
    <property type="project" value="UniProtKB-UniRule"/>
</dbReference>
<dbReference type="GO" id="GO:0000287">
    <property type="term" value="F:magnesium ion binding"/>
    <property type="evidence" value="ECO:0007669"/>
    <property type="project" value="UniProtKB-UniRule"/>
</dbReference>
<dbReference type="GO" id="GO:0000049">
    <property type="term" value="F:tRNA binding"/>
    <property type="evidence" value="ECO:0007669"/>
    <property type="project" value="UniProtKB-UniRule"/>
</dbReference>
<dbReference type="GO" id="GO:0042245">
    <property type="term" value="P:RNA repair"/>
    <property type="evidence" value="ECO:0007669"/>
    <property type="project" value="UniProtKB-KW"/>
</dbReference>
<dbReference type="GO" id="GO:0001680">
    <property type="term" value="P:tRNA 3'-terminal CCA addition"/>
    <property type="evidence" value="ECO:0007669"/>
    <property type="project" value="UniProtKB-UniRule"/>
</dbReference>
<dbReference type="CDD" id="cd05400">
    <property type="entry name" value="NT_2-5OAS_ClassI-CCAase"/>
    <property type="match status" value="1"/>
</dbReference>
<dbReference type="Gene3D" id="3.30.460.10">
    <property type="entry name" value="Beta Polymerase, domain 2"/>
    <property type="match status" value="1"/>
</dbReference>
<dbReference type="Gene3D" id="1.10.1410.30">
    <property type="entry name" value="CCA tRNA nucleotidyltransferase, domain 2"/>
    <property type="match status" value="1"/>
</dbReference>
<dbReference type="Gene3D" id="3.30.70.590">
    <property type="entry name" value="Poly(A) polymerase predicted RNA binding domain"/>
    <property type="match status" value="1"/>
</dbReference>
<dbReference type="HAMAP" id="MF_01264">
    <property type="entry name" value="CCA_arch"/>
    <property type="match status" value="1"/>
</dbReference>
<dbReference type="InterPro" id="IPR048833">
    <property type="entry name" value="CAA_C"/>
</dbReference>
<dbReference type="InterPro" id="IPR008229">
    <property type="entry name" value="CCA-adding_arc"/>
</dbReference>
<dbReference type="InterPro" id="IPR042090">
    <property type="entry name" value="CCA_tRNA_nucleotrans_2"/>
</dbReference>
<dbReference type="InterPro" id="IPR006116">
    <property type="entry name" value="NT_2-5OAS_ClassI-CCAase"/>
</dbReference>
<dbReference type="InterPro" id="IPR043519">
    <property type="entry name" value="NT_sf"/>
</dbReference>
<dbReference type="InterPro" id="IPR011068">
    <property type="entry name" value="NuclTrfase_I-like_C"/>
</dbReference>
<dbReference type="InterPro" id="IPR002934">
    <property type="entry name" value="Polymerase_NTP_transf_dom"/>
</dbReference>
<dbReference type="InterPro" id="IPR015329">
    <property type="entry name" value="tRNA_NucTransf2"/>
</dbReference>
<dbReference type="NCBIfam" id="TIGR03671">
    <property type="entry name" value="cca_archaeal"/>
    <property type="match status" value="1"/>
</dbReference>
<dbReference type="PANTHER" id="PTHR39643">
    <property type="entry name" value="CCA-ADDING ENZYME"/>
    <property type="match status" value="1"/>
</dbReference>
<dbReference type="PANTHER" id="PTHR39643:SF1">
    <property type="entry name" value="CCA-ADDING ENZYME"/>
    <property type="match status" value="1"/>
</dbReference>
<dbReference type="Pfam" id="PF21133">
    <property type="entry name" value="CAA_C"/>
    <property type="match status" value="1"/>
</dbReference>
<dbReference type="Pfam" id="PF01909">
    <property type="entry name" value="NTP_transf_2"/>
    <property type="match status" value="1"/>
</dbReference>
<dbReference type="Pfam" id="PF09249">
    <property type="entry name" value="tRNA_NucTransf2"/>
    <property type="match status" value="1"/>
</dbReference>
<dbReference type="PIRSF" id="PIRSF005335">
    <property type="entry name" value="CCA_arch"/>
    <property type="match status" value="1"/>
</dbReference>
<dbReference type="SUPFAM" id="SSF81301">
    <property type="entry name" value="Nucleotidyltransferase"/>
    <property type="match status" value="1"/>
</dbReference>
<dbReference type="SUPFAM" id="SSF55003">
    <property type="entry name" value="PAP/Archaeal CCA-adding enzyme, C-terminal domain"/>
    <property type="match status" value="1"/>
</dbReference>
<dbReference type="SUPFAM" id="SSF81631">
    <property type="entry name" value="PAP/OAS1 substrate-binding domain"/>
    <property type="match status" value="1"/>
</dbReference>